<accession>B1VFG3</accession>
<name>RL28_CORU7</name>
<reference key="1">
    <citation type="journal article" date="2008" name="J. Biotechnol.">
        <title>The lifestyle of Corynebacterium urealyticum derived from its complete genome sequence established by pyrosequencing.</title>
        <authorList>
            <person name="Tauch A."/>
            <person name="Trost E."/>
            <person name="Tilker A."/>
            <person name="Ludewig U."/>
            <person name="Schneiker S."/>
            <person name="Goesmann A."/>
            <person name="Arnold W."/>
            <person name="Bekel T."/>
            <person name="Brinkrolf K."/>
            <person name="Brune I."/>
            <person name="Goetker S."/>
            <person name="Kalinowski J."/>
            <person name="Kamp P.-B."/>
            <person name="Lobo F.P."/>
            <person name="Viehoever P."/>
            <person name="Weisshaar B."/>
            <person name="Soriano F."/>
            <person name="Droege M."/>
            <person name="Puehler A."/>
        </authorList>
    </citation>
    <scope>NUCLEOTIDE SEQUENCE [LARGE SCALE GENOMIC DNA]</scope>
    <source>
        <strain>ATCC 43042 / DSM 7109</strain>
    </source>
</reference>
<evidence type="ECO:0000255" key="1">
    <source>
        <dbReference type="HAMAP-Rule" id="MF_00373"/>
    </source>
</evidence>
<evidence type="ECO:0000256" key="2">
    <source>
        <dbReference type="SAM" id="MobiDB-lite"/>
    </source>
</evidence>
<evidence type="ECO:0000305" key="3"/>
<gene>
    <name evidence="1" type="primary">rpmB</name>
    <name type="ordered locus">cu0542</name>
</gene>
<comment type="similarity">
    <text evidence="1">Belongs to the bacterial ribosomal protein bL28 family.</text>
</comment>
<keyword id="KW-1185">Reference proteome</keyword>
<keyword id="KW-0687">Ribonucleoprotein</keyword>
<keyword id="KW-0689">Ribosomal protein</keyword>
<sequence length="78" mass="8877">MSAYCQVTGRKPGFGKQVSHSHRHTSRRWNPNVQRRKFYLPSEGRTITLTVSPKGLKTIDRDGIESVVAKIRARGEKI</sequence>
<feature type="chain" id="PRO_1000121612" description="Large ribosomal subunit protein bL28">
    <location>
        <begin position="1"/>
        <end position="78"/>
    </location>
</feature>
<feature type="region of interest" description="Disordered" evidence="2">
    <location>
        <begin position="1"/>
        <end position="28"/>
    </location>
</feature>
<protein>
    <recommendedName>
        <fullName evidence="1">Large ribosomal subunit protein bL28</fullName>
    </recommendedName>
    <alternativeName>
        <fullName evidence="3">50S ribosomal protein L28</fullName>
    </alternativeName>
</protein>
<dbReference type="EMBL" id="AM942444">
    <property type="protein sequence ID" value="CAQ04502.1"/>
    <property type="molecule type" value="Genomic_DNA"/>
</dbReference>
<dbReference type="RefSeq" id="WP_012359794.1">
    <property type="nucleotide sequence ID" value="NC_010545.1"/>
</dbReference>
<dbReference type="SMR" id="B1VFG3"/>
<dbReference type="STRING" id="504474.cu0542"/>
<dbReference type="GeneID" id="60605342"/>
<dbReference type="KEGG" id="cur:cu0542"/>
<dbReference type="eggNOG" id="COG0227">
    <property type="taxonomic scope" value="Bacteria"/>
</dbReference>
<dbReference type="HOGENOM" id="CLU_064548_3_1_11"/>
<dbReference type="Proteomes" id="UP000001727">
    <property type="component" value="Chromosome"/>
</dbReference>
<dbReference type="GO" id="GO:1990904">
    <property type="term" value="C:ribonucleoprotein complex"/>
    <property type="evidence" value="ECO:0007669"/>
    <property type="project" value="UniProtKB-KW"/>
</dbReference>
<dbReference type="GO" id="GO:0005840">
    <property type="term" value="C:ribosome"/>
    <property type="evidence" value="ECO:0007669"/>
    <property type="project" value="UniProtKB-KW"/>
</dbReference>
<dbReference type="GO" id="GO:0003735">
    <property type="term" value="F:structural constituent of ribosome"/>
    <property type="evidence" value="ECO:0007669"/>
    <property type="project" value="InterPro"/>
</dbReference>
<dbReference type="GO" id="GO:0006412">
    <property type="term" value="P:translation"/>
    <property type="evidence" value="ECO:0007669"/>
    <property type="project" value="UniProtKB-UniRule"/>
</dbReference>
<dbReference type="FunFam" id="2.30.170.40:FF:000001">
    <property type="entry name" value="50S ribosomal protein L28"/>
    <property type="match status" value="1"/>
</dbReference>
<dbReference type="Gene3D" id="2.30.170.40">
    <property type="entry name" value="Ribosomal protein L28/L24"/>
    <property type="match status" value="1"/>
</dbReference>
<dbReference type="HAMAP" id="MF_00373">
    <property type="entry name" value="Ribosomal_bL28"/>
    <property type="match status" value="1"/>
</dbReference>
<dbReference type="InterPro" id="IPR026569">
    <property type="entry name" value="Ribosomal_bL28"/>
</dbReference>
<dbReference type="InterPro" id="IPR034704">
    <property type="entry name" value="Ribosomal_bL28/bL31-like_sf"/>
</dbReference>
<dbReference type="InterPro" id="IPR001383">
    <property type="entry name" value="Ribosomal_bL28_bact-type"/>
</dbReference>
<dbReference type="InterPro" id="IPR037147">
    <property type="entry name" value="Ribosomal_bL28_sf"/>
</dbReference>
<dbReference type="NCBIfam" id="TIGR00009">
    <property type="entry name" value="L28"/>
    <property type="match status" value="1"/>
</dbReference>
<dbReference type="PANTHER" id="PTHR13528">
    <property type="entry name" value="39S RIBOSOMAL PROTEIN L28, MITOCHONDRIAL"/>
    <property type="match status" value="1"/>
</dbReference>
<dbReference type="PANTHER" id="PTHR13528:SF2">
    <property type="entry name" value="LARGE RIBOSOMAL SUBUNIT PROTEIN BL28M"/>
    <property type="match status" value="1"/>
</dbReference>
<dbReference type="Pfam" id="PF00830">
    <property type="entry name" value="Ribosomal_L28"/>
    <property type="match status" value="1"/>
</dbReference>
<dbReference type="SUPFAM" id="SSF143800">
    <property type="entry name" value="L28p-like"/>
    <property type="match status" value="1"/>
</dbReference>
<proteinExistence type="inferred from homology"/>
<organism>
    <name type="scientific">Corynebacterium urealyticum (strain ATCC 43042 / DSM 7109)</name>
    <dbReference type="NCBI Taxonomy" id="504474"/>
    <lineage>
        <taxon>Bacteria</taxon>
        <taxon>Bacillati</taxon>
        <taxon>Actinomycetota</taxon>
        <taxon>Actinomycetes</taxon>
        <taxon>Mycobacteriales</taxon>
        <taxon>Corynebacteriaceae</taxon>
        <taxon>Corynebacterium</taxon>
    </lineage>
</organism>